<sequence length="99" mass="11582">MLERLKAITNLLKGALEQRSRAEEGYIREEKVKEAIELLEALERDIMEKELKLAKEALEKFDSNRKFYYLVGKLYVEVSKEEAQKLIEDELKMFGGEGK</sequence>
<name>Y754_AQUAE</name>
<proteinExistence type="predicted"/>
<keyword id="KW-0175">Coiled coil</keyword>
<keyword id="KW-1185">Reference proteome</keyword>
<reference key="1">
    <citation type="journal article" date="1998" name="Nature">
        <title>The complete genome of the hyperthermophilic bacterium Aquifex aeolicus.</title>
        <authorList>
            <person name="Deckert G."/>
            <person name="Warren P.V."/>
            <person name="Gaasterland T."/>
            <person name="Young W.G."/>
            <person name="Lenox A.L."/>
            <person name="Graham D.E."/>
            <person name="Overbeek R."/>
            <person name="Snead M.A."/>
            <person name="Keller M."/>
            <person name="Aujay M."/>
            <person name="Huber R."/>
            <person name="Feldman R.A."/>
            <person name="Short J.M."/>
            <person name="Olsen G.J."/>
            <person name="Swanson R.V."/>
        </authorList>
    </citation>
    <scope>NUCLEOTIDE SEQUENCE [LARGE SCALE GENOMIC DNA]</scope>
    <source>
        <strain>VF5</strain>
    </source>
</reference>
<accession>O66956</accession>
<gene>
    <name type="ordered locus">aq_754</name>
</gene>
<feature type="chain" id="PRO_0000186876" description="Uncharacterized protein aq_754">
    <location>
        <begin position="1"/>
        <end position="99"/>
    </location>
</feature>
<feature type="coiled-coil region" evidence="1">
    <location>
        <begin position="3"/>
        <end position="68"/>
    </location>
</feature>
<dbReference type="EMBL" id="AE000657">
    <property type="protein sequence ID" value="AAC06922.1"/>
    <property type="molecule type" value="Genomic_DNA"/>
</dbReference>
<dbReference type="PIR" id="A70366">
    <property type="entry name" value="A70366"/>
</dbReference>
<dbReference type="RefSeq" id="NP_213517.1">
    <property type="nucleotide sequence ID" value="NC_000918.1"/>
</dbReference>
<dbReference type="RefSeq" id="WP_010880455.1">
    <property type="nucleotide sequence ID" value="NC_000918.1"/>
</dbReference>
<dbReference type="SMR" id="O66956"/>
<dbReference type="STRING" id="224324.aq_754"/>
<dbReference type="EnsemblBacteria" id="AAC06922">
    <property type="protein sequence ID" value="AAC06922"/>
    <property type="gene ID" value="aq_754"/>
</dbReference>
<dbReference type="KEGG" id="aae:aq_754"/>
<dbReference type="HOGENOM" id="CLU_2314303_0_0_0"/>
<dbReference type="InParanoid" id="O66956"/>
<dbReference type="Proteomes" id="UP000000798">
    <property type="component" value="Chromosome"/>
</dbReference>
<dbReference type="GO" id="GO:0016272">
    <property type="term" value="C:prefoldin complex"/>
    <property type="evidence" value="ECO:0007669"/>
    <property type="project" value="InterPro"/>
</dbReference>
<dbReference type="GO" id="GO:0051082">
    <property type="term" value="F:unfolded protein binding"/>
    <property type="evidence" value="ECO:0007669"/>
    <property type="project" value="InterPro"/>
</dbReference>
<dbReference type="GO" id="GO:0006457">
    <property type="term" value="P:protein folding"/>
    <property type="evidence" value="ECO:0007669"/>
    <property type="project" value="InterPro"/>
</dbReference>
<dbReference type="Gene3D" id="1.10.287.370">
    <property type="match status" value="1"/>
</dbReference>
<dbReference type="InterPro" id="IPR002777">
    <property type="entry name" value="PFD_beta-like"/>
</dbReference>
<dbReference type="InterPro" id="IPR009053">
    <property type="entry name" value="Prefoldin"/>
</dbReference>
<dbReference type="Pfam" id="PF01920">
    <property type="entry name" value="Prefoldin_2"/>
    <property type="match status" value="1"/>
</dbReference>
<dbReference type="SUPFAM" id="SSF46579">
    <property type="entry name" value="Prefoldin"/>
    <property type="match status" value="1"/>
</dbReference>
<organism>
    <name type="scientific">Aquifex aeolicus (strain VF5)</name>
    <dbReference type="NCBI Taxonomy" id="224324"/>
    <lineage>
        <taxon>Bacteria</taxon>
        <taxon>Pseudomonadati</taxon>
        <taxon>Aquificota</taxon>
        <taxon>Aquificia</taxon>
        <taxon>Aquificales</taxon>
        <taxon>Aquificaceae</taxon>
        <taxon>Aquifex</taxon>
    </lineage>
</organism>
<evidence type="ECO:0000255" key="1"/>
<protein>
    <recommendedName>
        <fullName>Uncharacterized protein aq_754</fullName>
    </recommendedName>
</protein>